<organism>
    <name type="scientific">Arabidopsis thaliana</name>
    <name type="common">Mouse-ear cress</name>
    <dbReference type="NCBI Taxonomy" id="3702"/>
    <lineage>
        <taxon>Eukaryota</taxon>
        <taxon>Viridiplantae</taxon>
        <taxon>Streptophyta</taxon>
        <taxon>Embryophyta</taxon>
        <taxon>Tracheophyta</taxon>
        <taxon>Spermatophyta</taxon>
        <taxon>Magnoliopsida</taxon>
        <taxon>eudicotyledons</taxon>
        <taxon>Gunneridae</taxon>
        <taxon>Pentapetalae</taxon>
        <taxon>rosids</taxon>
        <taxon>malvids</taxon>
        <taxon>Brassicales</taxon>
        <taxon>Brassicaceae</taxon>
        <taxon>Camelineae</taxon>
        <taxon>Arabidopsis</taxon>
    </lineage>
</organism>
<name>ENL01_ARATH</name>
<feature type="signal peptide" evidence="1">
    <location>
        <begin position="1"/>
        <end position="27"/>
    </location>
</feature>
<feature type="chain" id="PRO_5014312871" description="Early nodulin-like protein 1">
    <location>
        <begin position="28"/>
        <end position="345"/>
    </location>
</feature>
<feature type="propeptide" id="PRO_0000457730" description="Removed in mature form" evidence="1">
    <location>
        <begin position="346"/>
        <end position="370"/>
    </location>
</feature>
<feature type="domain" description="Phytocyanin" evidence="3">
    <location>
        <begin position="28"/>
        <end position="129"/>
    </location>
</feature>
<feature type="region of interest" description="Disordered" evidence="4">
    <location>
        <begin position="135"/>
        <end position="347"/>
    </location>
</feature>
<feature type="compositionally biased region" description="Low complexity" evidence="4">
    <location>
        <begin position="135"/>
        <end position="175"/>
    </location>
</feature>
<feature type="compositionally biased region" description="Polar residues" evidence="4">
    <location>
        <begin position="176"/>
        <end position="194"/>
    </location>
</feature>
<feature type="compositionally biased region" description="Low complexity" evidence="4">
    <location>
        <begin position="195"/>
        <end position="205"/>
    </location>
</feature>
<feature type="compositionally biased region" description="Low complexity" evidence="4">
    <location>
        <begin position="215"/>
        <end position="290"/>
    </location>
</feature>
<feature type="compositionally biased region" description="Pro residues" evidence="4">
    <location>
        <begin position="291"/>
        <end position="305"/>
    </location>
</feature>
<feature type="compositionally biased region" description="Low complexity" evidence="4">
    <location>
        <begin position="306"/>
        <end position="318"/>
    </location>
</feature>
<feature type="compositionally biased region" description="Polar residues" evidence="4">
    <location>
        <begin position="319"/>
        <end position="334"/>
    </location>
</feature>
<feature type="lipid moiety-binding region" description="GPI-anchor amidated asparagine" evidence="1">
    <location>
        <position position="345"/>
    </location>
</feature>
<feature type="glycosylation site" description="N-linked (GlcNAc...) asparagine" evidence="2">
    <location>
        <position position="58"/>
    </location>
</feature>
<feature type="glycosylation site" description="N-linked (GlcNAc...) asparagine" evidence="2">
    <location>
        <position position="334"/>
    </location>
</feature>
<feature type="disulfide bond" evidence="3">
    <location>
        <begin position="83"/>
        <end position="117"/>
    </location>
</feature>
<comment type="function">
    <text evidence="7">May act as a carbohydrate transporter.</text>
</comment>
<comment type="subcellular location">
    <subcellularLocation>
        <location evidence="1">Cell membrane</location>
        <topology evidence="1">Lipid-anchor</topology>
        <topology evidence="1">GPI-anchor</topology>
    </subcellularLocation>
</comment>
<comment type="tissue specificity">
    <text evidence="5">Mostly expressed in stems, leaves and flowers, and, to a lower extent, in seedlings, roots and seeds.</text>
</comment>
<comment type="similarity">
    <text evidence="8">Belongs to the early nodulin-like (ENODL) family.</text>
</comment>
<sequence>MSAIMKSLCFSFLILASFATFFSVADAWRFNVGGNGAWVTNPQENYNTWAERNRFQVNDSLYFKYAKGSDSVQQVMKADFDGCNVRNPIKNFENGESVVTLDRSGAFYFISGNQDHCQKGQKLIVVVLAVRNQPSAPAHSPVPSVSPTQPPKSHSPVSPVAPASAPSKSQPPRSSVSPAQPPKSSSPISHTPALSPSHATSHSPATPSPSPKSPSPVSHSPSHSPAHTPSHSPAHTPSHSPAHAPSHSPAHAPSHSPAHAPSHSPAHSPSHSPATPKSPSPSSSPAQSPATPSPMTPQSPSPVSSPSPDQSAAPSDQSTPLAPSPSETTPTADNITAPAPSPRTNSASGLAVTSVMSTLFSATFTFLMFA</sequence>
<proteinExistence type="evidence at transcript level"/>
<gene>
    <name evidence="6" type="primary">ENODL1</name>
    <name evidence="6" type="synonym">EN1</name>
    <name evidence="9" type="ordered locus">At5g53870</name>
    <name evidence="10" type="ORF">K19P17.3</name>
</gene>
<protein>
    <recommendedName>
        <fullName evidence="6">Early nodulin-like protein 1</fullName>
        <shortName evidence="6">AtENODL1</shortName>
    </recommendedName>
    <alternativeName>
        <fullName evidence="8">Phytocyanin-like protein ENODL1</fullName>
    </alternativeName>
</protein>
<reference key="1">
    <citation type="journal article" date="1997" name="DNA Res.">
        <title>Structural analysis of Arabidopsis thaliana chromosome 5. III. Sequence features of the regions of 1,191,918 bp covered by seventeen physically assigned P1 clones.</title>
        <authorList>
            <person name="Nakamura Y."/>
            <person name="Sato S."/>
            <person name="Kaneko T."/>
            <person name="Kotani H."/>
            <person name="Asamizu E."/>
            <person name="Miyajima N."/>
            <person name="Tabata S."/>
        </authorList>
    </citation>
    <scope>NUCLEOTIDE SEQUENCE [LARGE SCALE GENOMIC DNA]</scope>
    <source>
        <strain>cv. Columbia</strain>
    </source>
</reference>
<reference key="2">
    <citation type="journal article" date="2017" name="Plant J.">
        <title>Araport11: a complete reannotation of the Arabidopsis thaliana reference genome.</title>
        <authorList>
            <person name="Cheng C.Y."/>
            <person name="Krishnakumar V."/>
            <person name="Chan A.P."/>
            <person name="Thibaud-Nissen F."/>
            <person name="Schobel S."/>
            <person name="Town C.D."/>
        </authorList>
    </citation>
    <scope>GENOME REANNOTATION</scope>
    <source>
        <strain>cv. Columbia</strain>
    </source>
</reference>
<reference key="3">
    <citation type="submission" date="2006-07" db="EMBL/GenBank/DDBJ databases">
        <title>Arabidopsis ORF clone.</title>
        <authorList>
            <person name="Quinitio C."/>
            <person name="Chen H."/>
            <person name="Kim C.J."/>
            <person name="Shinn P."/>
            <person name="Ecker J.R."/>
        </authorList>
    </citation>
    <scope>NUCLEOTIDE SEQUENCE [LARGE SCALE MRNA]</scope>
    <source>
        <strain>cv. Columbia</strain>
    </source>
</reference>
<reference key="4">
    <citation type="journal article" date="2003" name="Plant Physiol.">
        <title>Identification of glycosylphosphatidylinositol-anchored proteins in Arabidopsis. A proteomic and genomic analysis.</title>
        <authorList>
            <person name="Borner G.H.H."/>
            <person name="Lilley K.S."/>
            <person name="Stevens T.J."/>
            <person name="Dupree P."/>
        </authorList>
    </citation>
    <scope>GENE FAMILY</scope>
    <source>
        <strain>cv. Columbia</strain>
    </source>
</reference>
<reference key="5">
    <citation type="journal article" date="2009" name="Biosci. Biotechnol. Biochem.">
        <title>Genome-wide identification, structure and expression studies, and mutant collection of 22 early nodulin-like protein genes in Arabidopsis.</title>
        <authorList>
            <person name="Mashiguchi K."/>
            <person name="Asami T."/>
            <person name="Suzuki Y."/>
        </authorList>
    </citation>
    <scope>TISSUE SPECIFICITY</scope>
    <scope>GENE FAMILY</scope>
    <scope>NOMENCLATURE</scope>
    <source>
        <strain>cv. Columbia</strain>
    </source>
</reference>
<reference key="6">
    <citation type="journal article" date="2014" name="Plant Cell Physiol.">
        <title>Emerging functions of nodulin-like proteins in non-nodulating plant species.</title>
        <authorList>
            <person name="Denance N."/>
            <person name="Szurek B."/>
            <person name="Noel L.D."/>
        </authorList>
    </citation>
    <scope>REVIEW ON NODULIN-LIKE PROTEINS</scope>
</reference>
<evidence type="ECO:0000255" key="1"/>
<evidence type="ECO:0000255" key="2">
    <source>
        <dbReference type="PROSITE-ProRule" id="PRU00498"/>
    </source>
</evidence>
<evidence type="ECO:0000255" key="3">
    <source>
        <dbReference type="PROSITE-ProRule" id="PRU00818"/>
    </source>
</evidence>
<evidence type="ECO:0000256" key="4">
    <source>
        <dbReference type="SAM" id="MobiDB-lite"/>
    </source>
</evidence>
<evidence type="ECO:0000269" key="5">
    <source>
    </source>
</evidence>
<evidence type="ECO:0000303" key="6">
    <source>
    </source>
</evidence>
<evidence type="ECO:0000303" key="7">
    <source>
    </source>
</evidence>
<evidence type="ECO:0000305" key="8"/>
<evidence type="ECO:0000312" key="9">
    <source>
        <dbReference type="Araport" id="AT5G53870"/>
    </source>
</evidence>
<evidence type="ECO:0000312" key="10">
    <source>
        <dbReference type="EMBL" id="BAB10717.1"/>
    </source>
</evidence>
<keyword id="KW-1003">Cell membrane</keyword>
<keyword id="KW-1015">Disulfide bond</keyword>
<keyword id="KW-0325">Glycoprotein</keyword>
<keyword id="KW-0336">GPI-anchor</keyword>
<keyword id="KW-0449">Lipoprotein</keyword>
<keyword id="KW-0472">Membrane</keyword>
<keyword id="KW-1185">Reference proteome</keyword>
<keyword id="KW-0732">Signal</keyword>
<dbReference type="EMBL" id="AB007644">
    <property type="protein sequence ID" value="BAB10717.1"/>
    <property type="molecule type" value="Genomic_DNA"/>
</dbReference>
<dbReference type="EMBL" id="CP002688">
    <property type="protein sequence ID" value="AED96421.1"/>
    <property type="molecule type" value="Genomic_DNA"/>
</dbReference>
<dbReference type="EMBL" id="BT026028">
    <property type="protein sequence ID" value="ABG48384.1"/>
    <property type="molecule type" value="mRNA"/>
</dbReference>
<dbReference type="RefSeq" id="NP_200198.1">
    <property type="nucleotide sequence ID" value="NM_124766.3"/>
</dbReference>
<dbReference type="SMR" id="Q9FN39"/>
<dbReference type="STRING" id="3702.Q9FN39"/>
<dbReference type="GlyGen" id="Q9FN39">
    <property type="glycosylation" value="5 sites"/>
</dbReference>
<dbReference type="PaxDb" id="3702-AT5G53870.1"/>
<dbReference type="ProteomicsDB" id="192099"/>
<dbReference type="EnsemblPlants" id="AT5G53870.1">
    <property type="protein sequence ID" value="AT5G53870.1"/>
    <property type="gene ID" value="AT5G53870"/>
</dbReference>
<dbReference type="GeneID" id="835468"/>
<dbReference type="Gramene" id="AT5G53870.1">
    <property type="protein sequence ID" value="AT5G53870.1"/>
    <property type="gene ID" value="AT5G53870"/>
</dbReference>
<dbReference type="KEGG" id="ath:AT5G53870"/>
<dbReference type="Araport" id="AT5G53870"/>
<dbReference type="TAIR" id="AT5G53870">
    <property type="gene designation" value="ENODL1"/>
</dbReference>
<dbReference type="eggNOG" id="ENOG502RZ81">
    <property type="taxonomic scope" value="Eukaryota"/>
</dbReference>
<dbReference type="HOGENOM" id="CLU_058719_0_0_1"/>
<dbReference type="InParanoid" id="Q9FN39"/>
<dbReference type="OMA" id="INPQENY"/>
<dbReference type="PRO" id="PR:Q9FN39"/>
<dbReference type="Proteomes" id="UP000006548">
    <property type="component" value="Chromosome 5"/>
</dbReference>
<dbReference type="ExpressionAtlas" id="Q9FN39">
    <property type="expression patterns" value="baseline and differential"/>
</dbReference>
<dbReference type="GO" id="GO:0005886">
    <property type="term" value="C:plasma membrane"/>
    <property type="evidence" value="ECO:0007005"/>
    <property type="project" value="TAIR"/>
</dbReference>
<dbReference type="GO" id="GO:0098552">
    <property type="term" value="C:side of membrane"/>
    <property type="evidence" value="ECO:0007669"/>
    <property type="project" value="UniProtKB-KW"/>
</dbReference>
<dbReference type="GO" id="GO:0009055">
    <property type="term" value="F:electron transfer activity"/>
    <property type="evidence" value="ECO:0007669"/>
    <property type="project" value="InterPro"/>
</dbReference>
<dbReference type="CDD" id="cd11019">
    <property type="entry name" value="OsENODL1_like"/>
    <property type="match status" value="1"/>
</dbReference>
<dbReference type="FunFam" id="2.60.40.420:FF:000010">
    <property type="entry name" value="Early nodulin-like protein 1"/>
    <property type="match status" value="1"/>
</dbReference>
<dbReference type="Gene3D" id="2.60.40.420">
    <property type="entry name" value="Cupredoxins - blue copper proteins"/>
    <property type="match status" value="1"/>
</dbReference>
<dbReference type="InterPro" id="IPR008972">
    <property type="entry name" value="Cupredoxin"/>
</dbReference>
<dbReference type="InterPro" id="IPR041846">
    <property type="entry name" value="ENL_dom"/>
</dbReference>
<dbReference type="InterPro" id="IPR039391">
    <property type="entry name" value="Phytocyanin-like"/>
</dbReference>
<dbReference type="InterPro" id="IPR003245">
    <property type="entry name" value="Phytocyanin_dom"/>
</dbReference>
<dbReference type="PANTHER" id="PTHR33021">
    <property type="entry name" value="BLUE COPPER PROTEIN"/>
    <property type="match status" value="1"/>
</dbReference>
<dbReference type="PANTHER" id="PTHR33021:SF556">
    <property type="entry name" value="EARLY NODULIN-LIKE PROTEIN 1"/>
    <property type="match status" value="1"/>
</dbReference>
<dbReference type="Pfam" id="PF02298">
    <property type="entry name" value="Cu_bind_like"/>
    <property type="match status" value="1"/>
</dbReference>
<dbReference type="SUPFAM" id="SSF49503">
    <property type="entry name" value="Cupredoxins"/>
    <property type="match status" value="1"/>
</dbReference>
<dbReference type="PROSITE" id="PS51485">
    <property type="entry name" value="PHYTOCYANIN"/>
    <property type="match status" value="1"/>
</dbReference>
<accession>Q9FN39</accession>